<name>SIA4A_HUMAN</name>
<organism>
    <name type="scientific">Homo sapiens</name>
    <name type="common">Human</name>
    <dbReference type="NCBI Taxonomy" id="9606"/>
    <lineage>
        <taxon>Eukaryota</taxon>
        <taxon>Metazoa</taxon>
        <taxon>Chordata</taxon>
        <taxon>Craniata</taxon>
        <taxon>Vertebrata</taxon>
        <taxon>Euteleostomi</taxon>
        <taxon>Mammalia</taxon>
        <taxon>Eutheria</taxon>
        <taxon>Euarchontoglires</taxon>
        <taxon>Primates</taxon>
        <taxon>Haplorrhini</taxon>
        <taxon>Catarrhini</taxon>
        <taxon>Hominidae</taxon>
        <taxon>Homo</taxon>
    </lineage>
</organism>
<accession>Q11201</accession>
<accession>O60677</accession>
<accession>Q9UN51</accession>
<sequence length="340" mass="39075">MVTLRKRTLKVLTFLVLFIFLTSFFLNYSHTMVATTWFPKQMVLELSENLKRLIKHRPCTCTHCIGQRKLSAWFDERFNQTMQPLLTAQNALLEDDTYRWWLRLQREKKPNNLNDTIKELFRVVPGNVDPMLEKRSVGCRRCAVVGNSGNLRESSYGPEIDSHDFVLRMNKAPTAGFEADVGTKTTHHLVYPESFRELGDNVSMILVPFKTIDLEWVVSAITTGTISHTYIPVPAKIRVKQDKILIYHPAFIKYVFDNWLQGHGRYPSTGILSVIFSMHVCDEVDLYGFGADSKGNWHHYWENNPSAGAFRKTGVHDADFESNVTATLASINKIRIFKGR</sequence>
<reference key="1">
    <citation type="journal article" date="1994" name="J. Biol. Chem.">
        <title>Differential expression of five sialyltransferase genes in human tissues.</title>
        <authorList>
            <person name="Kitagawa H."/>
            <person name="Paulson J.C."/>
        </authorList>
    </citation>
    <scope>NUCLEOTIDE SEQUENCE [MRNA]</scope>
    <scope>FUNCTION</scope>
    <scope>CATALYTIC ACTIVITY</scope>
    <scope>PATHWAY</scope>
    <scope>TISSUE SPECIFICITY</scope>
    <source>
        <tissue>Placenta</tissue>
    </source>
</reference>
<reference key="2">
    <citation type="journal article" date="1995" name="Glycobiology">
        <title>Three genes that encode human beta-galactoside alpha 2,3-sialyltransferases. Structural analysis and chromosomal mapping studies.</title>
        <authorList>
            <person name="Chang M.-L."/>
            <person name="Eddy R.L."/>
            <person name="Shows T.B."/>
            <person name="Lau J.T.Y."/>
        </authorList>
    </citation>
    <scope>NUCLEOTIDE SEQUENCE [MRNA]</scope>
    <source>
        <tissue>Submandibular gland</tissue>
    </source>
</reference>
<reference key="3">
    <citation type="journal article" date="1999" name="Eur. J. Biochem.">
        <title>Molecular cloning and expression of Galbeta1,3GalNAc alpha2, 3-sialyltransferase from human fetal liver.</title>
        <authorList>
            <person name="Shang J."/>
            <person name="Qiu R."/>
            <person name="Wang J."/>
            <person name="Liu J."/>
            <person name="Zhou R."/>
            <person name="Ding H."/>
            <person name="Yang S."/>
            <person name="Zhang S."/>
            <person name="Jin C."/>
        </authorList>
    </citation>
    <scope>NUCLEOTIDE SEQUENCE [MRNA]</scope>
    <source>
        <tissue>Fetal liver</tissue>
    </source>
</reference>
<reference key="4">
    <citation type="journal article" date="2004" name="Genome Res.">
        <title>The status, quality, and expansion of the NIH full-length cDNA project: the Mammalian Gene Collection (MGC).</title>
        <authorList>
            <consortium name="The MGC Project Team"/>
        </authorList>
    </citation>
    <scope>NUCLEOTIDE SEQUENCE [LARGE SCALE MRNA]</scope>
    <source>
        <tissue>Skin</tissue>
    </source>
</reference>
<reference key="5">
    <citation type="journal article" date="1997" name="J. Cell Biol.">
        <title>A transfected sialyltransferase that is elevated in breast cancer and localizes to the medial/trans-Golgi apparatus inhibits the development of core-2-based O-glycans.</title>
        <authorList>
            <person name="Whitehouse C."/>
            <person name="Burchell J."/>
            <person name="Gschmeissner S."/>
            <person name="Brockhausen I."/>
            <person name="Lloyd K.O."/>
            <person name="Taylor-Papadimitriou J."/>
        </authorList>
    </citation>
    <scope>SUBCELLULAR LOCATION</scope>
</reference>
<reference key="6">
    <citation type="journal article" date="2019" name="Sci. Rep.">
        <title>Products of Chemoenzymatic Synthesis Representing MUC1 Tandem Repeat Unit with T-, ST- or STn-antigen Revealed Distinct Specificities of Anti-MUC1 Antibodies.</title>
        <authorList>
            <person name="Yoshimura Y."/>
            <person name="Denda-Nagai K."/>
            <person name="Takahashi Y."/>
            <person name="Nagashima I."/>
            <person name="Shimizu H."/>
            <person name="Kishimoto T."/>
            <person name="Noji M."/>
            <person name="Shichino S."/>
            <person name="Chiba Y."/>
            <person name="Irimura T."/>
        </authorList>
    </citation>
    <scope>FUNCTION</scope>
    <scope>CATALYTIC ACTIVITY</scope>
</reference>
<reference key="7">
    <citation type="journal article" date="2019" name="Sci. Rep.">
        <title>Structural and functional role of disulphide bonds and substrate binding residues of the human beta-galactoside alpha-2,3-sialyltransferase 1 (hST3Gal1).</title>
        <authorList>
            <person name="Ortiz-Soto M.E."/>
            <person name="Reising S."/>
            <person name="Schlosser A."/>
            <person name="Seibel J."/>
        </authorList>
    </citation>
    <scope>FUNCTION</scope>
    <scope>CATALYTIC ACTIVITY</scope>
    <scope>BIOPHYSICOCHEMICAL PROPERTIES</scope>
    <scope>MUTAGENESIS OF CYS-59; CYS-61; CYS-64; CYS-139; CYS-142; ASN-147; SER-148; ASN-170; TYR-191; TYR-230; CYS-281 AND VAL-315</scope>
</reference>
<protein>
    <recommendedName>
        <fullName>CMP-N-acetylneuraminate-beta-galactosamide-alpha-2,3-sialyltransferase 1</fullName>
        <shortName>Alpha 2,3-ST 1</shortName>
        <shortName>Beta-galactoside alpha-2,3-sialyltransferase 1</shortName>
        <ecNumber evidence="5 6">2.4.3.4</ecNumber>
    </recommendedName>
    <alternativeName>
        <fullName>Gal-NAc6S</fullName>
    </alternativeName>
    <alternativeName>
        <fullName>Gal-beta-1,3-GalNAc-alpha-2,3-sialyltransferase</fullName>
    </alternativeName>
    <alternativeName>
        <fullName>Monosialoganglioside sialyltransferase</fullName>
        <ecNumber evidence="11">2.4.3.2</ecNumber>
    </alternativeName>
    <alternativeName>
        <fullName>SIATFL</fullName>
    </alternativeName>
    <alternativeName>
        <fullName>ST3Gal I</fullName>
        <shortName>ST3GalI</shortName>
    </alternativeName>
    <alternativeName>
        <fullName>ST3GalA.1</fullName>
    </alternativeName>
    <alternativeName>
        <fullName>ST3O</fullName>
    </alternativeName>
    <alternativeName>
        <fullName>Sialyltransferase 4A</fullName>
        <shortName>SIAT4-A</shortName>
    </alternativeName>
</protein>
<gene>
    <name evidence="8" type="primary">ST3GAL1</name>
    <name type="synonym">SIAT4</name>
    <name type="synonym">SIAT4A</name>
</gene>
<evidence type="ECO:0000250" key="1">
    <source>
        <dbReference type="UniProtKB" id="P54751"/>
    </source>
</evidence>
<evidence type="ECO:0000250" key="2">
    <source>
        <dbReference type="UniProtKB" id="Q02745"/>
    </source>
</evidence>
<evidence type="ECO:0000255" key="3"/>
<evidence type="ECO:0000269" key="4">
    <source>
    </source>
</evidence>
<evidence type="ECO:0000269" key="5">
    <source>
    </source>
</evidence>
<evidence type="ECO:0000269" key="6">
    <source>
    </source>
</evidence>
<evidence type="ECO:0000269" key="7">
    <source>
    </source>
</evidence>
<evidence type="ECO:0000303" key="8">
    <source>
    </source>
</evidence>
<evidence type="ECO:0000305" key="9"/>
<evidence type="ECO:0000305" key="10">
    <source>
    </source>
</evidence>
<evidence type="ECO:0000305" key="11">
    <source>
    </source>
</evidence>
<proteinExistence type="evidence at protein level"/>
<comment type="function">
    <text evidence="1 4 5 6">A beta-galactoside alpha2-&gt;3 sialyltransferase involved in terminal sialylation of glycoproteins and glycolipids (PubMed:31784620, PubMed:8027041). Catalyzes the transfer of sialic acid (N-acetyl-neuraminic acid; Neu5Ac) from the nucleotide sugar donor CMP-Neu5Ac onto acceptor Galbeta-(1-&gt;3)-GalNAc-terminated glycoconjugates through an alpha2-3 linkage (PubMed:31784620, PubMed:8027041, PubMed:31719620). Adds sialic acid to the core 1 O-glycan, Galbeta-(1-&gt;3)-GalNAc-O-Ser/Thr, which is a major structure of mucin-type O-glycans. As part of a homeostatic mechanism that regulates CD8-positive T cell numbers, sialylates core 1 O-glycans of T cell glycoproteins, SPN/CD43 and PTPRC/CD45. Prevents premature apoptosis of thymic CD8-positive T cells prior to peripheral emigration, whereas in the secondary lymphoid organs controls the survival of CD8-positive memory T cells generated following a successful immune response (By similarity). Transfers sialic acid to asialofetuin, presumably onto Galbeta-(1-&gt;3)-GalNAc-O-Ser (By similarity). Sialylates GM1a, GA1 and GD1b gangliosides to form GD1a, GM1b and GT1b, respectively (By similarity) (PubMed:8027041).</text>
</comment>
<comment type="catalytic activity">
    <reaction evidence="5 6">
        <text>a beta-D-galactosyl-(1-&gt;3)-N-acetyl-alpha-D-galactosaminyl derivative + CMP-N-acetyl-beta-neuraminate = an N-acetyl-alpha-neuraminyl-(2-&gt;3)-beta-D-galactosyl-(1-&gt;3)-N-acetyl-alpha-D-galactosaminyl derivative + CMP + H(+)</text>
        <dbReference type="Rhea" id="RHEA:21616"/>
        <dbReference type="ChEBI" id="CHEBI:15378"/>
        <dbReference type="ChEBI" id="CHEBI:57812"/>
        <dbReference type="ChEBI" id="CHEBI:60377"/>
        <dbReference type="ChEBI" id="CHEBI:133470"/>
        <dbReference type="ChEBI" id="CHEBI:139596"/>
        <dbReference type="EC" id="2.4.3.4"/>
    </reaction>
    <physiologicalReaction direction="left-to-right" evidence="11">
        <dbReference type="Rhea" id="RHEA:21617"/>
    </physiologicalReaction>
</comment>
<comment type="catalytic activity">
    <reaction evidence="6">
        <text>a ganglioside GM1 + CMP-N-acetyl-beta-neuraminate = a ganglioside GD1a + CMP + H(+)</text>
        <dbReference type="Rhea" id="RHEA:48260"/>
        <dbReference type="ChEBI" id="CHEBI:15378"/>
        <dbReference type="ChEBI" id="CHEBI:57812"/>
        <dbReference type="ChEBI" id="CHEBI:60377"/>
        <dbReference type="ChEBI" id="CHEBI:82637"/>
        <dbReference type="ChEBI" id="CHEBI:82639"/>
    </reaction>
    <physiologicalReaction direction="left-to-right" evidence="11">
        <dbReference type="Rhea" id="RHEA:48261"/>
    </physiologicalReaction>
</comment>
<comment type="catalytic activity">
    <reaction evidence="11">
        <text>a ganglioside GM1 (d18:1(4E)) + CMP-N-acetyl-beta-neuraminate = a ganglioside GD1a (d18:1(4E)) + CMP + H(+)</text>
        <dbReference type="Rhea" id="RHEA:18021"/>
        <dbReference type="ChEBI" id="CHEBI:15378"/>
        <dbReference type="ChEBI" id="CHEBI:57812"/>
        <dbReference type="ChEBI" id="CHEBI:60377"/>
        <dbReference type="ChEBI" id="CHEBI:77709"/>
        <dbReference type="ChEBI" id="CHEBI:78445"/>
        <dbReference type="EC" id="2.4.3.2"/>
    </reaction>
    <physiologicalReaction direction="left-to-right" evidence="11">
        <dbReference type="Rhea" id="RHEA:18022"/>
    </physiologicalReaction>
</comment>
<comment type="catalytic activity">
    <reaction evidence="1">
        <text>ganglioside GM1 (d18:1(4E)/18:0) + CMP-N-acetyl-beta-neuraminate = ganglioside GD1a (18:1(4E)/18:0) + CMP + H(+)</text>
        <dbReference type="Rhea" id="RHEA:48248"/>
        <dbReference type="ChEBI" id="CHEBI:15378"/>
        <dbReference type="ChEBI" id="CHEBI:57812"/>
        <dbReference type="ChEBI" id="CHEBI:60377"/>
        <dbReference type="ChEBI" id="CHEBI:73110"/>
        <dbReference type="ChEBI" id="CHEBI:90153"/>
    </reaction>
    <physiologicalReaction direction="left-to-right" evidence="1">
        <dbReference type="Rhea" id="RHEA:48249"/>
    </physiologicalReaction>
</comment>
<comment type="catalytic activity">
    <reaction evidence="6">
        <text>a ganglioside GA1 + CMP-N-acetyl-beta-neuraminate = a ganglioside GM1b + CMP + H(+)</text>
        <dbReference type="Rhea" id="RHEA:48244"/>
        <dbReference type="ChEBI" id="CHEBI:15378"/>
        <dbReference type="ChEBI" id="CHEBI:57812"/>
        <dbReference type="ChEBI" id="CHEBI:60377"/>
        <dbReference type="ChEBI" id="CHEBI:88069"/>
        <dbReference type="ChEBI" id="CHEBI:90151"/>
    </reaction>
    <physiologicalReaction direction="left-to-right" evidence="11">
        <dbReference type="Rhea" id="RHEA:48245"/>
    </physiologicalReaction>
</comment>
<comment type="catalytic activity">
    <reaction evidence="2">
        <text>a ganglioside GA1 (d18:1(4E)) + CMP-N-acetyl-beta-neuraminate = a ganglioside GM1b (d18:1(4E)) + CMP + H(+)</text>
        <dbReference type="Rhea" id="RHEA:47560"/>
        <dbReference type="ChEBI" id="CHEBI:15378"/>
        <dbReference type="ChEBI" id="CHEBI:27938"/>
        <dbReference type="ChEBI" id="CHEBI:57812"/>
        <dbReference type="ChEBI" id="CHEBI:60377"/>
        <dbReference type="ChEBI" id="CHEBI:78568"/>
    </reaction>
    <physiologicalReaction direction="left-to-right" evidence="2">
        <dbReference type="Rhea" id="RHEA:47561"/>
    </physiologicalReaction>
</comment>
<comment type="catalytic activity">
    <reaction evidence="1">
        <text>a ganglioside GD1b + CMP-N-acetyl-beta-neuraminate = a ganglioside GT1b + CMP + H(+)</text>
        <dbReference type="Rhea" id="RHEA:48240"/>
        <dbReference type="ChEBI" id="CHEBI:15378"/>
        <dbReference type="ChEBI" id="CHEBI:57812"/>
        <dbReference type="ChEBI" id="CHEBI:60377"/>
        <dbReference type="ChEBI" id="CHEBI:82939"/>
        <dbReference type="ChEBI" id="CHEBI:82940"/>
    </reaction>
    <physiologicalReaction direction="left-to-right" evidence="1">
        <dbReference type="Rhea" id="RHEA:48241"/>
    </physiologicalReaction>
</comment>
<comment type="catalytic activity">
    <reaction evidence="4">
        <text>a 3-O-[beta-D-galactosyl-(1-&gt;3)-N-acetyl-alpha-D-galactosaminyl]-L-threonyl-[protein] + CMP-N-acetyl-beta-neuraminate = a 3-O-[N-acetyl-alpha-neuraminyl-(2-&gt;3)-beta-D-galactosyl-(1-&gt;3)-N-acetyl-alpha-D-galactosaminyl]-L-threonyl-[protein] + CMP + H(+)</text>
        <dbReference type="Rhea" id="RHEA:56208"/>
        <dbReference type="Rhea" id="RHEA-COMP:13923"/>
        <dbReference type="Rhea" id="RHEA-COMP:14417"/>
        <dbReference type="ChEBI" id="CHEBI:15378"/>
        <dbReference type="ChEBI" id="CHEBI:57812"/>
        <dbReference type="ChEBI" id="CHEBI:60377"/>
        <dbReference type="ChEBI" id="CHEBI:137950"/>
        <dbReference type="ChEBI" id="CHEBI:139598"/>
    </reaction>
    <physiologicalReaction direction="left-to-right" evidence="10">
        <dbReference type="Rhea" id="RHEA:56209"/>
    </physiologicalReaction>
</comment>
<comment type="catalytic activity">
    <reaction evidence="4">
        <text>a 3-O-[beta-D-galactosyl-(1-&gt;3)-N-acetyl-alpha-D-galactosaminyl]-L-seryl-[protein] + CMP-N-acetyl-beta-neuraminate = 3-O-[N-acetyl-alpha-neuraminyl-(2-&gt;3)-beta-D-galactosyl-(1-&gt;3)-N-acetyl-alpha-D-galactosaminyl]-L-seryl-[protein] + CMP + H(+)</text>
        <dbReference type="Rhea" id="RHEA:56204"/>
        <dbReference type="Rhea" id="RHEA-COMP:13922"/>
        <dbReference type="Rhea" id="RHEA-COMP:14416"/>
        <dbReference type="ChEBI" id="CHEBI:15378"/>
        <dbReference type="ChEBI" id="CHEBI:57812"/>
        <dbReference type="ChEBI" id="CHEBI:60377"/>
        <dbReference type="ChEBI" id="CHEBI:137949"/>
        <dbReference type="ChEBI" id="CHEBI:139597"/>
    </reaction>
    <physiologicalReaction direction="left-to-right" evidence="10">
        <dbReference type="Rhea" id="RHEA:56205"/>
    </physiologicalReaction>
</comment>
<comment type="biophysicochemical properties">
    <kinetics>
        <KM evidence="5">106 uM for CMP-N-acetyl-beta-neuraminate</KM>
        <KM evidence="5">26 uM for beta-D-galactosyl-(1-&gt;3)-N-acetyl-alpha-D-galactosaminyl derivative</KM>
    </kinetics>
</comment>
<comment type="pathway">
    <text evidence="11">Protein modification; protein glycosylation.</text>
</comment>
<comment type="pathway">
    <text evidence="11">Glycolipid biosynthesis.</text>
</comment>
<comment type="subcellular location">
    <subcellularLocation>
        <location evidence="7">Golgi apparatus</location>
        <location evidence="7">Golgi stack membrane</location>
        <topology evidence="3">Single-pass type II membrane protein</topology>
    </subcellularLocation>
    <subcellularLocation>
        <location evidence="7">Golgi apparatus</location>
        <location evidence="7">trans-Golgi network membrane</location>
        <topology evidence="3">Single-pass type II membrane protein</topology>
    </subcellularLocation>
    <subcellularLocation>
        <location>Secreted</location>
    </subcellularLocation>
    <text evidence="7">Membrane-bound form in medial and trans cisternae of Golgi (PubMed:9182658). Secreted into the body fluid.</text>
</comment>
<comment type="tissue specificity">
    <text evidence="6">Expressed in several tissues. Highest expression in lung, liver, skeletal muscle, kidney, pancreas, spleen and placenta.</text>
</comment>
<comment type="PTM">
    <text>The soluble form derives from the membrane form by proteolytic processing.</text>
</comment>
<comment type="similarity">
    <text evidence="9">Belongs to the glycosyltransferase 29 family.</text>
</comment>
<comment type="online information" name="Functional Glycomics Gateway - GTase">
    <link uri="http://www.functionalglycomics.org/glycomics/molecule/jsp/glycoEnzyme/viewGlycoEnzyme.jsp?gbpId=gt_hum_622"/>
    <text>ST3Gal I</text>
</comment>
<keyword id="KW-1015">Disulfide bond</keyword>
<keyword id="KW-0325">Glycoprotein</keyword>
<keyword id="KW-0328">Glycosyltransferase</keyword>
<keyword id="KW-0333">Golgi apparatus</keyword>
<keyword id="KW-0443">Lipid metabolism</keyword>
<keyword id="KW-0472">Membrane</keyword>
<keyword id="KW-1267">Proteomics identification</keyword>
<keyword id="KW-1185">Reference proteome</keyword>
<keyword id="KW-0964">Secreted</keyword>
<keyword id="KW-0735">Signal-anchor</keyword>
<keyword id="KW-0808">Transferase</keyword>
<keyword id="KW-0812">Transmembrane</keyword>
<keyword id="KW-1133">Transmembrane helix</keyword>
<feature type="chain" id="PRO_0000149253" description="CMP-N-acetylneuraminate-beta-galactosamide-alpha-2,3-sialyltransferase 1">
    <location>
        <begin position="1"/>
        <end position="340"/>
    </location>
</feature>
<feature type="topological domain" description="Cytoplasmic" evidence="3">
    <location>
        <begin position="1"/>
        <end position="13"/>
    </location>
</feature>
<feature type="transmembrane region" description="Helical; Signal-anchor for type II membrane protein" evidence="3">
    <location>
        <begin position="14"/>
        <end position="34"/>
    </location>
</feature>
<feature type="topological domain" description="Lumenal" evidence="3">
    <location>
        <begin position="35"/>
        <end position="340"/>
    </location>
</feature>
<feature type="binding site" evidence="2">
    <location>
        <position position="105"/>
    </location>
    <ligand>
        <name>substrate</name>
    </ligand>
</feature>
<feature type="binding site" evidence="2">
    <location>
        <position position="147"/>
    </location>
    <ligand>
        <name>substrate</name>
    </ligand>
</feature>
<feature type="binding site" evidence="2">
    <location>
        <position position="170"/>
    </location>
    <ligand>
        <name>substrate</name>
    </ligand>
</feature>
<feature type="binding site" evidence="2">
    <location>
        <position position="230"/>
    </location>
    <ligand>
        <name>substrate</name>
    </ligand>
</feature>
<feature type="binding site" evidence="2">
    <location>
        <position position="266"/>
    </location>
    <ligand>
        <name>substrate</name>
    </ligand>
</feature>
<feature type="binding site" evidence="2">
    <location>
        <position position="270"/>
    </location>
    <ligand>
        <name>substrate</name>
    </ligand>
</feature>
<feature type="binding site" evidence="2">
    <location>
        <position position="290"/>
    </location>
    <ligand>
        <name>substrate</name>
    </ligand>
</feature>
<feature type="binding site" evidence="2">
    <location>
        <position position="299"/>
    </location>
    <ligand>
        <name>substrate</name>
    </ligand>
</feature>
<feature type="binding site" evidence="2">
    <location>
        <position position="316"/>
    </location>
    <ligand>
        <name>substrate</name>
    </ligand>
</feature>
<feature type="glycosylation site" description="N-linked (GlcNAc...) asparagine" evidence="3">
    <location>
        <position position="79"/>
    </location>
</feature>
<feature type="glycosylation site" description="N-linked (GlcNAc...) asparagine" evidence="3">
    <location>
        <position position="114"/>
    </location>
</feature>
<feature type="glycosylation site" description="N-linked (GlcNAc...) asparagine" evidence="3">
    <location>
        <position position="201"/>
    </location>
</feature>
<feature type="glycosylation site" description="N-linked (GlcNAc...) asparagine" evidence="3">
    <location>
        <position position="323"/>
    </location>
</feature>
<feature type="disulfide bond" evidence="2">
    <location>
        <begin position="59"/>
        <end position="64"/>
    </location>
</feature>
<feature type="disulfide bond" evidence="2">
    <location>
        <begin position="61"/>
        <end position="139"/>
    </location>
</feature>
<feature type="disulfide bond" evidence="2">
    <location>
        <begin position="142"/>
        <end position="281"/>
    </location>
</feature>
<feature type="sequence variant" id="VAR_049225" description="In dbSNP:rs116342938.">
    <original>N</original>
    <variation>S</variation>
    <location>
        <position position="111"/>
    </location>
</feature>
<feature type="mutagenesis site" description="Has no effect on the catalytic efficiency; when associated with S-64." evidence="5">
    <original>C</original>
    <variation>S</variation>
    <location>
        <position position="59"/>
    </location>
</feature>
<feature type="mutagenesis site" description="Loss of the catalytic activity; when associated with S-139." evidence="5">
    <original>C</original>
    <variation>S</variation>
    <location>
        <position position="61"/>
    </location>
</feature>
<feature type="mutagenesis site" description="Has no effect on the catalytic efficiency; when associated with S-59." evidence="5">
    <original>C</original>
    <variation>S</variation>
    <location>
        <position position="64"/>
    </location>
</feature>
<feature type="mutagenesis site" description="Loss of the catalytic activity; when associated with S-61." evidence="5">
    <original>C</original>
    <variation>S</variation>
    <location>
        <position position="139"/>
    </location>
</feature>
<feature type="mutagenesis site" description="Loss of the catalytic activity; when associated with S-281." evidence="5">
    <original>C</original>
    <variation>S</variation>
    <location>
        <position position="142"/>
    </location>
</feature>
<feature type="mutagenesis site" description="Decreases the affinity and the specific activity for both donor and acceptor substrates. Decreases the catalytic efficiency for the donor and acceptor substrates by 17- and 32-fold, respectively." evidence="5">
    <original>N</original>
    <variation>S</variation>
    <location>
        <position position="147"/>
    </location>
</feature>
<feature type="mutagenesis site" description="Decreases the affinity for the donor and acceptor substrates by 4.5- and 4-fold, respectively. Almost no change in specific activity." evidence="5">
    <original>S</original>
    <variation>A</variation>
    <location>
        <position position="148"/>
    </location>
</feature>
<feature type="mutagenesis site" description="Decreases the affinity and the catalytic efficiency for both donor and acceptor substrates." evidence="5">
    <original>N</original>
    <variation>A</variation>
    <location>
        <position position="170"/>
    </location>
</feature>
<feature type="mutagenesis site" description="Drastic decrease of the catalytic efficiency for both donor and acceptor substrates by 44- and 115-fold, respectively." evidence="5">
    <original>Y</original>
    <variation>A</variation>
    <location>
        <position position="191"/>
    </location>
</feature>
<feature type="mutagenesis site" description="Decreases the catalytic efficiency for the donor and acceptor substrates by 2.5- and 35-fold, respectively." evidence="5">
    <original>Y</original>
    <variation>A</variation>
    <location>
        <position position="230"/>
    </location>
</feature>
<feature type="mutagenesis site" description="Decreases the catalytic efficiency for the donor and acceptor substrates by 2- and 12-fold, respectively." evidence="5">
    <original>Y</original>
    <variation>F</variation>
    <location>
        <position position="230"/>
    </location>
</feature>
<feature type="mutagenesis site" description="Loss of the catalytic activity; when associated with S-142." evidence="5">
    <original>C</original>
    <variation>S</variation>
    <location>
        <position position="281"/>
    </location>
</feature>
<feature type="mutagenesis site" description="Decreases the catalytic efficiency for the donor and acceptor substrates by 5- and 70-fold, respectively." evidence="5">
    <original>V</original>
    <variation>A</variation>
    <location>
        <position position="315"/>
    </location>
</feature>
<feature type="mutagenesis site" description="Drastic decrease of the catalytic efficiency for both donor and acceptor substrates by 67- and 344-fold, respectively. Does not change the enzyme regioselectivity." evidence="5">
    <original>V</original>
    <variation>Y</variation>
    <location>
        <position position="315"/>
    </location>
</feature>
<feature type="sequence conflict" description="In Ref. 2; AAA36612." evidence="9" ref="2">
    <original>L</original>
    <variation>V</variation>
    <location>
        <position position="12"/>
    </location>
</feature>
<feature type="sequence conflict" description="In Ref. 3; AAC17874." evidence="9" ref="3">
    <original>L</original>
    <variation>V</variation>
    <location>
        <position position="86"/>
    </location>
</feature>
<feature type="sequence conflict" description="In Ref. 3; AAC17874." evidence="9" ref="3">
    <original>S</original>
    <variation>R</variation>
    <location>
        <position position="219"/>
    </location>
</feature>
<dbReference type="EC" id="2.4.3.4" evidence="5 6"/>
<dbReference type="EC" id="2.4.3.2" evidence="11"/>
<dbReference type="EMBL" id="L29555">
    <property type="protein sequence ID" value="AAA36612.1"/>
    <property type="molecule type" value="mRNA"/>
</dbReference>
<dbReference type="EMBL" id="L13972">
    <property type="protein sequence ID" value="AAC37574.1"/>
    <property type="molecule type" value="mRNA"/>
</dbReference>
<dbReference type="EMBL" id="AF059321">
    <property type="protein sequence ID" value="AAC17874.1"/>
    <property type="molecule type" value="mRNA"/>
</dbReference>
<dbReference type="EMBL" id="BC018357">
    <property type="protein sequence ID" value="AAH18357.1"/>
    <property type="molecule type" value="mRNA"/>
</dbReference>
<dbReference type="CCDS" id="CCDS6373.1"/>
<dbReference type="PIR" id="I54229">
    <property type="entry name" value="I54229"/>
</dbReference>
<dbReference type="RefSeq" id="NP_003024.1">
    <property type="nucleotide sequence ID" value="NM_003033.4"/>
</dbReference>
<dbReference type="RefSeq" id="NP_775479.1">
    <property type="nucleotide sequence ID" value="NM_173344.3"/>
</dbReference>
<dbReference type="RefSeq" id="XP_005251082.1">
    <property type="nucleotide sequence ID" value="XM_005251025.6"/>
</dbReference>
<dbReference type="RefSeq" id="XP_006716680.1">
    <property type="nucleotide sequence ID" value="XM_006716617.3"/>
</dbReference>
<dbReference type="RefSeq" id="XP_011515527.1">
    <property type="nucleotide sequence ID" value="XM_011517225.1"/>
</dbReference>
<dbReference type="RefSeq" id="XP_016869225.1">
    <property type="nucleotide sequence ID" value="XM_017013736.3"/>
</dbReference>
<dbReference type="RefSeq" id="XP_016869226.1">
    <property type="nucleotide sequence ID" value="XM_017013737.1"/>
</dbReference>
<dbReference type="RefSeq" id="XP_047278061.1">
    <property type="nucleotide sequence ID" value="XM_047422105.1"/>
</dbReference>
<dbReference type="RefSeq" id="XP_047278062.1">
    <property type="nucleotide sequence ID" value="XM_047422106.1"/>
</dbReference>
<dbReference type="RefSeq" id="XP_054216992.1">
    <property type="nucleotide sequence ID" value="XM_054361017.1"/>
</dbReference>
<dbReference type="RefSeq" id="XP_054216993.1">
    <property type="nucleotide sequence ID" value="XM_054361018.1"/>
</dbReference>
<dbReference type="RefSeq" id="XP_054216994.1">
    <property type="nucleotide sequence ID" value="XM_054361019.1"/>
</dbReference>
<dbReference type="RefSeq" id="XP_054216995.1">
    <property type="nucleotide sequence ID" value="XM_054361020.1"/>
</dbReference>
<dbReference type="SMR" id="Q11201"/>
<dbReference type="BioGRID" id="112375">
    <property type="interactions" value="28"/>
</dbReference>
<dbReference type="FunCoup" id="Q11201">
    <property type="interactions" value="212"/>
</dbReference>
<dbReference type="IntAct" id="Q11201">
    <property type="interactions" value="22"/>
</dbReference>
<dbReference type="STRING" id="9606.ENSP00000428540"/>
<dbReference type="BindingDB" id="Q11201"/>
<dbReference type="ChEMBL" id="CHEMBL3596074"/>
<dbReference type="CAZy" id="GT29">
    <property type="family name" value="Glycosyltransferase Family 29"/>
</dbReference>
<dbReference type="GlyConnect" id="1118">
    <property type="glycosylation" value="19 N-Linked glycans (3 sites)"/>
</dbReference>
<dbReference type="GlyCosmos" id="Q11201">
    <property type="glycosylation" value="4 sites, 19 glycans"/>
</dbReference>
<dbReference type="GlyGen" id="Q11201">
    <property type="glycosylation" value="8 sites, 34 N-linked glycans (4 sites)"/>
</dbReference>
<dbReference type="iPTMnet" id="Q11201"/>
<dbReference type="PhosphoSitePlus" id="Q11201"/>
<dbReference type="SwissPalm" id="Q11201"/>
<dbReference type="BioMuta" id="ST3GAL1"/>
<dbReference type="DMDM" id="1705559"/>
<dbReference type="jPOST" id="Q11201"/>
<dbReference type="MassIVE" id="Q11201"/>
<dbReference type="PaxDb" id="9606-ENSP00000428540"/>
<dbReference type="PeptideAtlas" id="Q11201"/>
<dbReference type="ProteomicsDB" id="58873"/>
<dbReference type="Pumba" id="Q11201"/>
<dbReference type="Antibodypedia" id="27484">
    <property type="antibodies" value="67 antibodies from 17 providers"/>
</dbReference>
<dbReference type="DNASU" id="6482"/>
<dbReference type="Ensembl" id="ENST00000521180.5">
    <property type="protein sequence ID" value="ENSP00000428540.1"/>
    <property type="gene ID" value="ENSG00000008513.17"/>
</dbReference>
<dbReference type="Ensembl" id="ENST00000522652.6">
    <property type="protein sequence ID" value="ENSP00000430515.1"/>
    <property type="gene ID" value="ENSG00000008513.17"/>
</dbReference>
<dbReference type="Ensembl" id="ENST00000648219.1">
    <property type="protein sequence ID" value="ENSP00000497381.1"/>
    <property type="gene ID" value="ENSG00000008513.17"/>
</dbReference>
<dbReference type="GeneID" id="6482"/>
<dbReference type="KEGG" id="hsa:6482"/>
<dbReference type="MANE-Select" id="ENST00000522652.6">
    <property type="protein sequence ID" value="ENSP00000430515.1"/>
    <property type="RefSeq nucleotide sequence ID" value="NM_173344.3"/>
    <property type="RefSeq protein sequence ID" value="NP_775479.1"/>
</dbReference>
<dbReference type="UCSC" id="uc003yuk.3">
    <property type="organism name" value="human"/>
</dbReference>
<dbReference type="AGR" id="HGNC:10862"/>
<dbReference type="CTD" id="6482"/>
<dbReference type="DisGeNET" id="6482"/>
<dbReference type="GeneCards" id="ST3GAL1"/>
<dbReference type="HGNC" id="HGNC:10862">
    <property type="gene designation" value="ST3GAL1"/>
</dbReference>
<dbReference type="HPA" id="ENSG00000008513">
    <property type="expression patterns" value="Low tissue specificity"/>
</dbReference>
<dbReference type="MIM" id="607187">
    <property type="type" value="gene"/>
</dbReference>
<dbReference type="neXtProt" id="NX_Q11201"/>
<dbReference type="OpenTargets" id="ENSG00000008513"/>
<dbReference type="PharmGKB" id="PA35764"/>
<dbReference type="VEuPathDB" id="HostDB:ENSG00000008513"/>
<dbReference type="eggNOG" id="KOG2692">
    <property type="taxonomic scope" value="Eukaryota"/>
</dbReference>
<dbReference type="GeneTree" id="ENSGT00940000154725"/>
<dbReference type="HOGENOM" id="CLU_032020_2_1_1"/>
<dbReference type="InParanoid" id="Q11201"/>
<dbReference type="OMA" id="RPCSCHT"/>
<dbReference type="OrthoDB" id="10264956at2759"/>
<dbReference type="PAN-GO" id="Q11201">
    <property type="GO annotations" value="5 GO annotations based on evolutionary models"/>
</dbReference>
<dbReference type="PhylomeDB" id="Q11201"/>
<dbReference type="TreeFam" id="TF354325"/>
<dbReference type="BioCyc" id="MetaCyc:HS00250-MONOMER"/>
<dbReference type="BRENDA" id="2.4.99.2">
    <property type="organism ID" value="2681"/>
</dbReference>
<dbReference type="BRENDA" id="2.4.99.4">
    <property type="organism ID" value="2681"/>
</dbReference>
<dbReference type="PathwayCommons" id="Q11201"/>
<dbReference type="Reactome" id="R-HSA-2022854">
    <property type="pathway name" value="Keratan sulfate biosynthesis"/>
</dbReference>
<dbReference type="Reactome" id="R-HSA-4085001">
    <property type="pathway name" value="Sialic acid metabolism"/>
</dbReference>
<dbReference type="Reactome" id="R-HSA-9683673">
    <property type="pathway name" value="Maturation of protein 3a"/>
</dbReference>
<dbReference type="Reactome" id="R-HSA-9694548">
    <property type="pathway name" value="Maturation of spike protein"/>
</dbReference>
<dbReference type="Reactome" id="R-HSA-9694719">
    <property type="pathway name" value="Maturation of protein 3a"/>
</dbReference>
<dbReference type="Reactome" id="R-HSA-977068">
    <property type="pathway name" value="Termination of O-glycan biosynthesis"/>
</dbReference>
<dbReference type="SignaLink" id="Q11201"/>
<dbReference type="SIGNOR" id="Q11201"/>
<dbReference type="UniPathway" id="UPA00378"/>
<dbReference type="BioGRID-ORCS" id="6482">
    <property type="hits" value="55 hits in 1150 CRISPR screens"/>
</dbReference>
<dbReference type="ChiTaRS" id="ST3GAL1">
    <property type="organism name" value="human"/>
</dbReference>
<dbReference type="GenomeRNAi" id="6482"/>
<dbReference type="Pharos" id="Q11201">
    <property type="development level" value="Tchem"/>
</dbReference>
<dbReference type="PRO" id="PR:Q11201"/>
<dbReference type="Proteomes" id="UP000005640">
    <property type="component" value="Chromosome 8"/>
</dbReference>
<dbReference type="RNAct" id="Q11201">
    <property type="molecule type" value="protein"/>
</dbReference>
<dbReference type="Bgee" id="ENSG00000008513">
    <property type="expression patterns" value="Expressed in right lobe of thyroid gland and 173 other cell types or tissues"/>
</dbReference>
<dbReference type="ExpressionAtlas" id="Q11201">
    <property type="expression patterns" value="baseline and differential"/>
</dbReference>
<dbReference type="GO" id="GO:0070062">
    <property type="term" value="C:extracellular exosome"/>
    <property type="evidence" value="ECO:0007005"/>
    <property type="project" value="UniProtKB"/>
</dbReference>
<dbReference type="GO" id="GO:1990675">
    <property type="term" value="C:Golgi medial cisterna membrane"/>
    <property type="evidence" value="ECO:0000314"/>
    <property type="project" value="UniProtKB"/>
</dbReference>
<dbReference type="GO" id="GO:0000139">
    <property type="term" value="C:Golgi membrane"/>
    <property type="evidence" value="ECO:0000304"/>
    <property type="project" value="Reactome"/>
</dbReference>
<dbReference type="GO" id="GO:1990676">
    <property type="term" value="C:Golgi trans cisterna membrane"/>
    <property type="evidence" value="ECO:0000314"/>
    <property type="project" value="UniProtKB"/>
</dbReference>
<dbReference type="GO" id="GO:0016020">
    <property type="term" value="C:membrane"/>
    <property type="evidence" value="ECO:0007005"/>
    <property type="project" value="UniProtKB"/>
</dbReference>
<dbReference type="GO" id="GO:0032588">
    <property type="term" value="C:trans-Golgi network membrane"/>
    <property type="evidence" value="ECO:0000314"/>
    <property type="project" value="UniProtKB"/>
</dbReference>
<dbReference type="GO" id="GO:0047288">
    <property type="term" value="F:beta-D-galactosyl-(1-&gt;3)-N-acetyl-beta-D-galactosaminide alpha-2,3- sialyltransferase"/>
    <property type="evidence" value="ECO:0007669"/>
    <property type="project" value="RHEA"/>
</dbReference>
<dbReference type="GO" id="GO:0003836">
    <property type="term" value="F:beta-galactoside (CMP) alpha-2,3-sialyltransferase activity"/>
    <property type="evidence" value="ECO:0000314"/>
    <property type="project" value="UniProtKB"/>
</dbReference>
<dbReference type="GO" id="GO:0008373">
    <property type="term" value="F:sialyltransferase activity"/>
    <property type="evidence" value="ECO:0000304"/>
    <property type="project" value="Reactome"/>
</dbReference>
<dbReference type="GO" id="GO:0010706">
    <property type="term" value="P:ganglioside biosynthetic process via lactosylceramide"/>
    <property type="evidence" value="ECO:0000314"/>
    <property type="project" value="UniProtKB"/>
</dbReference>
<dbReference type="GO" id="GO:0018146">
    <property type="term" value="P:keratan sulfate proteoglycan biosynthetic process"/>
    <property type="evidence" value="ECO:0000304"/>
    <property type="project" value="Reactome"/>
</dbReference>
<dbReference type="GO" id="GO:0002319">
    <property type="term" value="P:memory B cell differentiation"/>
    <property type="evidence" value="ECO:0007669"/>
    <property type="project" value="Ensembl"/>
</dbReference>
<dbReference type="GO" id="GO:0006054">
    <property type="term" value="P:N-acetylneuraminate metabolic process"/>
    <property type="evidence" value="ECO:0000250"/>
    <property type="project" value="UniProtKB"/>
</dbReference>
<dbReference type="GO" id="GO:1905403">
    <property type="term" value="P:negative regulation of activated CD8-positive, alpha-beta T cell apoptotic process"/>
    <property type="evidence" value="ECO:0007669"/>
    <property type="project" value="Ensembl"/>
</dbReference>
<dbReference type="GO" id="GO:0016266">
    <property type="term" value="P:O-glycan processing"/>
    <property type="evidence" value="ECO:0000304"/>
    <property type="project" value="Reactome"/>
</dbReference>
<dbReference type="GO" id="GO:0006486">
    <property type="term" value="P:protein glycosylation"/>
    <property type="evidence" value="ECO:0000318"/>
    <property type="project" value="GO_Central"/>
</dbReference>
<dbReference type="GO" id="GO:0036211">
    <property type="term" value="P:protein modification process"/>
    <property type="evidence" value="ECO:0000304"/>
    <property type="project" value="ProtInc"/>
</dbReference>
<dbReference type="GO" id="GO:0006487">
    <property type="term" value="P:protein N-linked glycosylation"/>
    <property type="evidence" value="ECO:0000250"/>
    <property type="project" value="UniProtKB"/>
</dbReference>
<dbReference type="GO" id="GO:1990743">
    <property type="term" value="P:protein sialylation"/>
    <property type="evidence" value="ECO:0000314"/>
    <property type="project" value="UniProtKB"/>
</dbReference>
<dbReference type="GO" id="GO:0097503">
    <property type="term" value="P:sialylation"/>
    <property type="evidence" value="ECO:0000250"/>
    <property type="project" value="UniProtKB"/>
</dbReference>
<dbReference type="GO" id="GO:0019082">
    <property type="term" value="P:viral protein processing"/>
    <property type="evidence" value="ECO:0000304"/>
    <property type="project" value="Reactome"/>
</dbReference>
<dbReference type="CDD" id="cd23980">
    <property type="entry name" value="GT29_ST3GAL1"/>
    <property type="match status" value="1"/>
</dbReference>
<dbReference type="FunFam" id="3.90.1480.20:FF:000034">
    <property type="entry name" value="CMP-N-acetylneuraminate-beta-galactosamide-alpha-2,3-sialyltransferase 1"/>
    <property type="match status" value="1"/>
</dbReference>
<dbReference type="Gene3D" id="3.90.1480.20">
    <property type="entry name" value="Glycosyl transferase family 29"/>
    <property type="match status" value="1"/>
</dbReference>
<dbReference type="InterPro" id="IPR051757">
    <property type="entry name" value="Beta-gal_alpha2-3_sialyltrans"/>
</dbReference>
<dbReference type="InterPro" id="IPR001675">
    <property type="entry name" value="Glyco_trans_29"/>
</dbReference>
<dbReference type="InterPro" id="IPR038578">
    <property type="entry name" value="GT29-like_sf"/>
</dbReference>
<dbReference type="InterPro" id="IPR012163">
    <property type="entry name" value="Sialyl_trans"/>
</dbReference>
<dbReference type="PANTHER" id="PTHR46032">
    <property type="entry name" value="ALPHA-2,3-SIALYLTRANSFERASE ST3GAL I ISOFORM X1"/>
    <property type="match status" value="1"/>
</dbReference>
<dbReference type="PANTHER" id="PTHR46032:SF6">
    <property type="entry name" value="CMP-N-ACETYLNEURAMINATE-BETA-GALACTOSAMIDE-ALPHA-2,3-SIALYLTRANSFERASE 1"/>
    <property type="match status" value="1"/>
</dbReference>
<dbReference type="Pfam" id="PF00777">
    <property type="entry name" value="Glyco_transf_29"/>
    <property type="match status" value="1"/>
</dbReference>
<dbReference type="PIRSF" id="PIRSF005557">
    <property type="entry name" value="Sialyl_trans"/>
    <property type="match status" value="1"/>
</dbReference>